<sequence length="759" mass="86106">MERIKELRNLMSQSRTREILTKTTVDHMAIIKKYTSGRQEKNPSLRMKWMMAMKYPITADKRITEMVPERNEQGQTLWSKMSDAGSDRVMVSPLAVTWWNRNGPMTSTVHYPKVYKTYFDKVERLKHGTFGPVHFRNQVKIRRRVDINPGHADLSAKEAQDVIMEVVFPNEVGARILTSESQLTITKEKKEELQDCKISPLMVAYMLERELVRKTRFLPVAGGTSSVYIEVLHLTQGTCWEQMYTPGGEVRNDDVDQSLIIAARNIVRRAAVSADPLASLLEMCHSTQIGGTRMMDILRQNPTEEQAVDICKAAMGLRISSSFSFGGFTFKRTSGSSIKREEEVLTGNLQTLKIRVHEGYEEFTMVGKRATAIIRKATRRLVQLIVSGRDEQSIAEAIIVAMVFSQEDCMIKAVRGDLNFVNRANQRLNPMHQLLRHFQKDAKVLFQNWGIEHIDNVMGMIGVLPDMTPSTEMSMRGIRVSKMGVDEYSSTERVVVSIDRFLRVRDQRGNVLLSPEEVSETQGTEKLTITYSSSMMWEINGPESVLVNTYQWIIRNWETVKIQWSQNPTMLYNKMEFEPFQSLVPKAIRGQYSGFVRTLFQQMRDVLGTFDTTQIIKLLPFAAAPPKQSRMQFSSLTVNVRGSGMRILVRGNSPVFNYNKTTKRLTILGKDAGTLIEDPDEGTSGVESAVLRGFLILGKEDRRYGPALSINELSNLAKGEKANVLIGQGDVVLVMKRKRDSSILTDSQTATKRIRMAIN</sequence>
<dbReference type="EMBL" id="CY002503">
    <property type="protein sequence ID" value="AAZ80018.1"/>
    <property type="molecule type" value="Genomic_RNA"/>
</dbReference>
<dbReference type="SMR" id="Q3YPY5"/>
<dbReference type="PRO" id="PR:Q3YPY5"/>
<dbReference type="Proteomes" id="UP000154307">
    <property type="component" value="Genome"/>
</dbReference>
<dbReference type="GO" id="GO:0033650">
    <property type="term" value="C:host cell mitochondrion"/>
    <property type="evidence" value="ECO:0007669"/>
    <property type="project" value="UniProtKB-SubCell"/>
</dbReference>
<dbReference type="GO" id="GO:0042025">
    <property type="term" value="C:host cell nucleus"/>
    <property type="evidence" value="ECO:0007669"/>
    <property type="project" value="UniProtKB-SubCell"/>
</dbReference>
<dbReference type="GO" id="GO:0044423">
    <property type="term" value="C:virion component"/>
    <property type="evidence" value="ECO:0007669"/>
    <property type="project" value="UniProtKB-UniRule"/>
</dbReference>
<dbReference type="GO" id="GO:0003723">
    <property type="term" value="F:RNA binding"/>
    <property type="evidence" value="ECO:0007669"/>
    <property type="project" value="UniProtKB-UniRule"/>
</dbReference>
<dbReference type="GO" id="GO:0003968">
    <property type="term" value="F:RNA-directed RNA polymerase activity"/>
    <property type="evidence" value="ECO:0007669"/>
    <property type="project" value="UniProtKB-UniRule"/>
</dbReference>
<dbReference type="GO" id="GO:0006370">
    <property type="term" value="P:7-methylguanosine mRNA capping"/>
    <property type="evidence" value="ECO:0007669"/>
    <property type="project" value="UniProtKB-UniRule"/>
</dbReference>
<dbReference type="GO" id="GO:0075526">
    <property type="term" value="P:cap snatching"/>
    <property type="evidence" value="ECO:0007669"/>
    <property type="project" value="UniProtKB-UniRule"/>
</dbReference>
<dbReference type="GO" id="GO:0006351">
    <property type="term" value="P:DNA-templated transcription"/>
    <property type="evidence" value="ECO:0007669"/>
    <property type="project" value="UniProtKB-UniRule"/>
</dbReference>
<dbReference type="GO" id="GO:0039545">
    <property type="term" value="P:symbiont-mediated suppression of host cytoplasmic pattern recognition receptor signaling pathway via inhibition of MAVS activity"/>
    <property type="evidence" value="ECO:0007669"/>
    <property type="project" value="UniProtKB-UniRule"/>
</dbReference>
<dbReference type="GO" id="GO:0039657">
    <property type="term" value="P:symbiont-mediated suppression of host gene expression"/>
    <property type="evidence" value="ECO:0007669"/>
    <property type="project" value="UniProtKB-KW"/>
</dbReference>
<dbReference type="GO" id="GO:0039523">
    <property type="term" value="P:symbiont-mediated suppression of host mRNA transcription via inhibition of RNA polymerase II activity"/>
    <property type="evidence" value="ECO:0007669"/>
    <property type="project" value="UniProtKB-UniRule"/>
</dbReference>
<dbReference type="GO" id="GO:0039694">
    <property type="term" value="P:viral RNA genome replication"/>
    <property type="evidence" value="ECO:0007669"/>
    <property type="project" value="InterPro"/>
</dbReference>
<dbReference type="FunFam" id="3.30.30.90:FF:000001">
    <property type="entry name" value="Polymerase basic protein 2"/>
    <property type="match status" value="1"/>
</dbReference>
<dbReference type="Gene3D" id="3.30.30.90">
    <property type="entry name" value="Polymerase Basic Protein 2, C-terminal domain"/>
    <property type="match status" value="1"/>
</dbReference>
<dbReference type="HAMAP" id="MF_04062">
    <property type="entry name" value="INV_PB2"/>
    <property type="match status" value="1"/>
</dbReference>
<dbReference type="InterPro" id="IPR049110">
    <property type="entry name" value="Flu_PB2_2nd"/>
</dbReference>
<dbReference type="InterPro" id="IPR049114">
    <property type="entry name" value="Flu_PB2_6th"/>
</dbReference>
<dbReference type="InterPro" id="IPR049115">
    <property type="entry name" value="Flu_PB2_C"/>
</dbReference>
<dbReference type="InterPro" id="IPR048298">
    <property type="entry name" value="Flu_PB2_CAP-bd"/>
</dbReference>
<dbReference type="InterPro" id="IPR049111">
    <property type="entry name" value="Flu_PB2_middle"/>
</dbReference>
<dbReference type="InterPro" id="IPR049106">
    <property type="entry name" value="Flu_PB2_N"/>
</dbReference>
<dbReference type="InterPro" id="IPR001591">
    <property type="entry name" value="INV_PB2"/>
</dbReference>
<dbReference type="InterPro" id="IPR049113">
    <property type="entry name" value="PB2_helical"/>
</dbReference>
<dbReference type="InterPro" id="IPR037258">
    <property type="entry name" value="PDB2_C"/>
</dbReference>
<dbReference type="Pfam" id="PF20947">
    <property type="entry name" value="Flu_PB2_1st"/>
    <property type="match status" value="1"/>
</dbReference>
<dbReference type="Pfam" id="PF20948">
    <property type="entry name" value="Flu_PB2_2nd"/>
    <property type="match status" value="1"/>
</dbReference>
<dbReference type="Pfam" id="PF20949">
    <property type="entry name" value="Flu_PB2_3rd"/>
    <property type="match status" value="1"/>
</dbReference>
<dbReference type="Pfam" id="PF20950">
    <property type="entry name" value="Flu_PB2_4th"/>
    <property type="match status" value="1"/>
</dbReference>
<dbReference type="Pfam" id="PF00604">
    <property type="entry name" value="Flu_PB2_5th"/>
    <property type="match status" value="1"/>
</dbReference>
<dbReference type="Pfam" id="PF20951">
    <property type="entry name" value="Flu_PB2_6th"/>
    <property type="match status" value="1"/>
</dbReference>
<dbReference type="Pfam" id="PF20952">
    <property type="entry name" value="Flu_PB2_7th"/>
    <property type="match status" value="1"/>
</dbReference>
<dbReference type="SUPFAM" id="SSF160453">
    <property type="entry name" value="PB2 C-terminal domain-like"/>
    <property type="match status" value="1"/>
</dbReference>
<comment type="function">
    <text evidence="1">Plays an essential role in transcription initiation and cap-stealing mechanism, in which cellular capped pre-mRNAs are used to generate primers for viral transcription. Recognizes and binds the 7-methylguanosine-containing cap of the target pre-RNA which is subsequently cleaved after 10-13 nucleotides by the viral protein PA. Plays a role in the initiation of the viral genome replication and modulates the activity of the ribonucleoprotein (RNP) complex. In addition, participates in the inhibition of type I interferon induction through interaction with and inhibition of the host mitochondrial antiviral signaling protein MAVS.</text>
</comment>
<comment type="subunit">
    <text evidence="1">Influenza RNA polymerase is composed of three subunits: PB1, PB2 and PA. Interacts (via N-terminus) with PB1 (via C-terminus). Interacts with nucleoprotein NP (via N-terminus). Interacts (via N-terminus) with host MAVS (via N-terminus); this interaction inhibits host innate immune response.</text>
</comment>
<comment type="subcellular location">
    <subcellularLocation>
        <location evidence="1">Virion</location>
    </subcellularLocation>
    <subcellularLocation>
        <location evidence="1">Host nucleus</location>
    </subcellularLocation>
    <subcellularLocation>
        <location evidence="1">Host mitochondrion</location>
    </subcellularLocation>
</comment>
<comment type="similarity">
    <text evidence="1">Belongs to the influenza viruses PB2 family.</text>
</comment>
<feature type="chain" id="PRO_0000279637" description="Polymerase basic protein 2">
    <location>
        <begin position="1"/>
        <end position="759"/>
    </location>
</feature>
<feature type="short sequence motif" description="Nuclear localization signal" evidence="1">
    <location>
        <begin position="736"/>
        <end position="739"/>
    </location>
</feature>
<feature type="site" description="Mammalian adaptation" evidence="1">
    <location>
        <position position="627"/>
    </location>
</feature>
<evidence type="ECO:0000255" key="1">
    <source>
        <dbReference type="HAMAP-Rule" id="MF_04062"/>
    </source>
</evidence>
<keyword id="KW-1157">Cap snatching</keyword>
<keyword id="KW-1262">Eukaryotic host gene expression shutoff by virus</keyword>
<keyword id="KW-1191">Eukaryotic host transcription shutoff by virus</keyword>
<keyword id="KW-1190">Host gene expression shutoff by virus</keyword>
<keyword id="KW-1045">Host mitochondrion</keyword>
<keyword id="KW-1048">Host nucleus</keyword>
<keyword id="KW-0945">Host-virus interaction</keyword>
<keyword id="KW-1090">Inhibition of host innate immune response by virus</keyword>
<keyword id="KW-1097">Inhibition of host MAVS by virus</keyword>
<keyword id="KW-1113">Inhibition of host RLR pathway by virus</keyword>
<keyword id="KW-1104">Inhibition of host RNA polymerase II by virus</keyword>
<keyword id="KW-0506">mRNA capping</keyword>
<keyword id="KW-0507">mRNA processing</keyword>
<keyword id="KW-0899">Viral immunoevasion</keyword>
<keyword id="KW-1195">Viral transcription</keyword>
<keyword id="KW-0946">Virion</keyword>
<accession>Q3YPY5</accession>
<name>PB2_I71A1</name>
<protein>
    <recommendedName>
        <fullName evidence="1">Polymerase basic protein 2</fullName>
    </recommendedName>
    <alternativeName>
        <fullName evidence="1">RNA-directed RNA polymerase subunit P3</fullName>
    </alternativeName>
</protein>
<organismHost>
    <name type="scientific">Aves</name>
    <dbReference type="NCBI Taxonomy" id="8782"/>
</organismHost>
<organismHost>
    <name type="scientific">Cetacea</name>
    <name type="common">whales</name>
    <dbReference type="NCBI Taxonomy" id="9721"/>
</organismHost>
<organismHost>
    <name type="scientific">Homo sapiens</name>
    <name type="common">Human</name>
    <dbReference type="NCBI Taxonomy" id="9606"/>
</organismHost>
<organismHost>
    <name type="scientific">Phocidae</name>
    <name type="common">true seals</name>
    <dbReference type="NCBI Taxonomy" id="9709"/>
</organismHost>
<organismHost>
    <name type="scientific">Sus scrofa</name>
    <name type="common">Pig</name>
    <dbReference type="NCBI Taxonomy" id="9823"/>
</organismHost>
<organism>
    <name type="scientific">Influenza A virus (strain A/Memphis/1/1971 H3N2)</name>
    <dbReference type="NCBI Taxonomy" id="383586"/>
    <lineage>
        <taxon>Viruses</taxon>
        <taxon>Riboviria</taxon>
        <taxon>Orthornavirae</taxon>
        <taxon>Negarnaviricota</taxon>
        <taxon>Polyploviricotina</taxon>
        <taxon>Insthoviricetes</taxon>
        <taxon>Articulavirales</taxon>
        <taxon>Orthomyxoviridae</taxon>
        <taxon>Alphainfluenzavirus</taxon>
        <taxon>Alphainfluenzavirus influenzae</taxon>
        <taxon>Influenza A virus</taxon>
    </lineage>
</organism>
<proteinExistence type="inferred from homology"/>
<reference key="1">
    <citation type="submission" date="2005-08" db="EMBL/GenBank/DDBJ databases">
        <title>The NIAID influenza genome sequencing project.</title>
        <authorList>
            <person name="Ghedin E."/>
            <person name="Spiro D."/>
            <person name="Miller N."/>
            <person name="Zaborsky J."/>
            <person name="Feldblyum T."/>
            <person name="Subbu V."/>
            <person name="Shumway M."/>
            <person name="Sparenborg J."/>
            <person name="Groveman L."/>
            <person name="Halpin R."/>
            <person name="Sitz J."/>
            <person name="Koo H."/>
            <person name="Salzberg S.L."/>
            <person name="Webster R.G."/>
            <person name="Hoffmann E."/>
            <person name="Krauss S."/>
            <person name="Naeve C."/>
            <person name="Bao Y."/>
            <person name="Bolotov P."/>
            <person name="Dernovoy D."/>
            <person name="Kiryutin B."/>
            <person name="Lipman D.J."/>
            <person name="Tatusova T."/>
        </authorList>
    </citation>
    <scope>NUCLEOTIDE SEQUENCE [GENOMIC RNA]</scope>
</reference>
<gene>
    <name evidence="1" type="primary">PB2</name>
</gene>